<keyword id="KW-0012">Acyltransferase</keyword>
<keyword id="KW-0028">Amino-acid biosynthesis</keyword>
<keyword id="KW-0963">Cytoplasm</keyword>
<keyword id="KW-0220">Diaminopimelate biosynthesis</keyword>
<keyword id="KW-0457">Lysine biosynthesis</keyword>
<keyword id="KW-0460">Magnesium</keyword>
<keyword id="KW-0479">Metal-binding</keyword>
<keyword id="KW-1185">Reference proteome</keyword>
<keyword id="KW-0808">Transferase</keyword>
<name>DAPD_MYCS2</name>
<evidence type="ECO:0000255" key="1">
    <source>
        <dbReference type="HAMAP-Rule" id="MF_02122"/>
    </source>
</evidence>
<reference key="1">
    <citation type="submission" date="2006-10" db="EMBL/GenBank/DDBJ databases">
        <authorList>
            <person name="Fleischmann R.D."/>
            <person name="Dodson R.J."/>
            <person name="Haft D.H."/>
            <person name="Merkel J.S."/>
            <person name="Nelson W.C."/>
            <person name="Fraser C.M."/>
        </authorList>
    </citation>
    <scope>NUCLEOTIDE SEQUENCE [LARGE SCALE GENOMIC DNA]</scope>
    <source>
        <strain>ATCC 700084 / mc(2)155</strain>
    </source>
</reference>
<reference key="2">
    <citation type="journal article" date="2007" name="Genome Biol.">
        <title>Interrupted coding sequences in Mycobacterium smegmatis: authentic mutations or sequencing errors?</title>
        <authorList>
            <person name="Deshayes C."/>
            <person name="Perrodou E."/>
            <person name="Gallien S."/>
            <person name="Euphrasie D."/>
            <person name="Schaeffer C."/>
            <person name="Van-Dorsselaer A."/>
            <person name="Poch O."/>
            <person name="Lecompte O."/>
            <person name="Reyrat J.-M."/>
        </authorList>
    </citation>
    <scope>NUCLEOTIDE SEQUENCE [LARGE SCALE GENOMIC DNA]</scope>
    <source>
        <strain>ATCC 700084 / mc(2)155</strain>
    </source>
</reference>
<reference key="3">
    <citation type="journal article" date="2009" name="Genome Res.">
        <title>Ortho-proteogenomics: multiple proteomes investigation through orthology and a new MS-based protocol.</title>
        <authorList>
            <person name="Gallien S."/>
            <person name="Perrodou E."/>
            <person name="Carapito C."/>
            <person name="Deshayes C."/>
            <person name="Reyrat J.-M."/>
            <person name="Van Dorsselaer A."/>
            <person name="Poch O."/>
            <person name="Schaeffer C."/>
            <person name="Lecompte O."/>
        </authorList>
    </citation>
    <scope>NUCLEOTIDE SEQUENCE [LARGE SCALE GENOMIC DNA]</scope>
    <source>
        <strain>ATCC 700084 / mc(2)155</strain>
    </source>
</reference>
<organism>
    <name type="scientific">Mycolicibacterium smegmatis (strain ATCC 700084 / mc(2)155)</name>
    <name type="common">Mycobacterium smegmatis</name>
    <dbReference type="NCBI Taxonomy" id="246196"/>
    <lineage>
        <taxon>Bacteria</taxon>
        <taxon>Bacillati</taxon>
        <taxon>Actinomycetota</taxon>
        <taxon>Actinomycetes</taxon>
        <taxon>Mycobacteriales</taxon>
        <taxon>Mycobacteriaceae</taxon>
        <taxon>Mycolicibacterium</taxon>
    </lineage>
</organism>
<proteinExistence type="inferred from homology"/>
<gene>
    <name evidence="1" type="primary">dapD</name>
    <name type="ordered locus">MSMEG_5104</name>
    <name type="ordered locus">MSMEI_4976</name>
</gene>
<feature type="chain" id="PRO_0000412262" description="2,3,4,5-tetrahydropyridine-2,6-dicarboxylate N-succinyltransferase">
    <location>
        <begin position="1"/>
        <end position="314"/>
    </location>
</feature>
<feature type="active site" description="Acyl-anhydride intermediate" evidence="1">
    <location>
        <position position="196"/>
    </location>
</feature>
<feature type="binding site" evidence="1">
    <location>
        <position position="163"/>
    </location>
    <ligand>
        <name>Mg(2+)</name>
        <dbReference type="ChEBI" id="CHEBI:18420"/>
        <label>1</label>
        <note>ligand shared between trimeric partners</note>
    </ligand>
</feature>
<feature type="binding site" evidence="1">
    <location>
        <position position="180"/>
    </location>
    <ligand>
        <name>Mg(2+)</name>
        <dbReference type="ChEBI" id="CHEBI:18420"/>
        <label>2</label>
        <note>ligand shared between trimeric partners</note>
    </ligand>
</feature>
<feature type="binding site" evidence="1">
    <location>
        <position position="198"/>
    </location>
    <ligand>
        <name>succinyl-CoA</name>
        <dbReference type="ChEBI" id="CHEBI:57292"/>
    </ligand>
</feature>
<feature type="binding site" evidence="1">
    <location>
        <position position="213"/>
    </location>
    <ligand>
        <name>succinyl-CoA</name>
        <dbReference type="ChEBI" id="CHEBI:57292"/>
    </ligand>
</feature>
<feature type="binding site" evidence="1">
    <location>
        <position position="216"/>
    </location>
    <ligand>
        <name>succinyl-CoA</name>
        <dbReference type="ChEBI" id="CHEBI:57292"/>
    </ligand>
</feature>
<feature type="binding site" evidence="1">
    <location>
        <position position="239"/>
    </location>
    <ligand>
        <name>succinyl-CoA</name>
        <dbReference type="ChEBI" id="CHEBI:57292"/>
    </ligand>
</feature>
<feature type="binding site" evidence="1">
    <location>
        <begin position="254"/>
        <end position="255"/>
    </location>
    <ligand>
        <name>succinyl-CoA</name>
        <dbReference type="ChEBI" id="CHEBI:57292"/>
    </ligand>
</feature>
<feature type="binding site" evidence="1">
    <location>
        <position position="262"/>
    </location>
    <ligand>
        <name>succinyl-CoA</name>
        <dbReference type="ChEBI" id="CHEBI:57292"/>
    </ligand>
</feature>
<feature type="binding site" evidence="1">
    <location>
        <position position="274"/>
    </location>
    <ligand>
        <name>succinyl-CoA</name>
        <dbReference type="ChEBI" id="CHEBI:57292"/>
    </ligand>
</feature>
<feature type="binding site" evidence="1">
    <location>
        <begin position="287"/>
        <end position="290"/>
    </location>
    <ligand>
        <name>succinyl-CoA</name>
        <dbReference type="ChEBI" id="CHEBI:57292"/>
    </ligand>
</feature>
<accession>A0R2G5</accession>
<accession>I7FJC0</accession>
<protein>
    <recommendedName>
        <fullName evidence="1">2,3,4,5-tetrahydropyridine-2,6-dicarboxylate N-succinyltransferase</fullName>
        <ecNumber evidence="1">2.3.1.117</ecNumber>
    </recommendedName>
    <alternativeName>
        <fullName evidence="1">Tetrahydrodipicolinate N-succinyltransferase</fullName>
        <shortName evidence="1">THDP succinyltransferase</shortName>
        <shortName evidence="1">THP succinyltransferase</shortName>
    </alternativeName>
    <alternativeName>
        <fullName evidence="1">Tetrahydropicolinate succinylase</fullName>
    </alternativeName>
</protein>
<dbReference type="EC" id="2.3.1.117" evidence="1"/>
<dbReference type="EMBL" id="CP000480">
    <property type="protein sequence ID" value="ABK71765.1"/>
    <property type="molecule type" value="Genomic_DNA"/>
</dbReference>
<dbReference type="EMBL" id="CP001663">
    <property type="protein sequence ID" value="AFP41420.1"/>
    <property type="molecule type" value="Genomic_DNA"/>
</dbReference>
<dbReference type="RefSeq" id="WP_011730317.1">
    <property type="nucleotide sequence ID" value="NZ_SIJM01000068.1"/>
</dbReference>
<dbReference type="RefSeq" id="YP_889353.1">
    <property type="nucleotide sequence ID" value="NC_008596.1"/>
</dbReference>
<dbReference type="SMR" id="A0R2G5"/>
<dbReference type="STRING" id="246196.MSMEG_5104"/>
<dbReference type="PaxDb" id="246196-MSMEI_4976"/>
<dbReference type="GeneID" id="93459771"/>
<dbReference type="KEGG" id="msb:LJ00_25235"/>
<dbReference type="KEGG" id="msg:MSMEI_4976"/>
<dbReference type="KEGG" id="msm:MSMEG_5104"/>
<dbReference type="PATRIC" id="fig|246196.19.peg.4980"/>
<dbReference type="eggNOG" id="COG2171">
    <property type="taxonomic scope" value="Bacteria"/>
</dbReference>
<dbReference type="OrthoDB" id="9782799at2"/>
<dbReference type="UniPathway" id="UPA00034">
    <property type="reaction ID" value="UER00019"/>
</dbReference>
<dbReference type="Proteomes" id="UP000000757">
    <property type="component" value="Chromosome"/>
</dbReference>
<dbReference type="Proteomes" id="UP000006158">
    <property type="component" value="Chromosome"/>
</dbReference>
<dbReference type="GO" id="GO:0005737">
    <property type="term" value="C:cytoplasm"/>
    <property type="evidence" value="ECO:0007669"/>
    <property type="project" value="UniProtKB-SubCell"/>
</dbReference>
<dbReference type="GO" id="GO:0008666">
    <property type="term" value="F:2,3,4,5-tetrahydropyridine-2,6-dicarboxylate N-succinyltransferase activity"/>
    <property type="evidence" value="ECO:0007669"/>
    <property type="project" value="UniProtKB-UniRule"/>
</dbReference>
<dbReference type="GO" id="GO:0000287">
    <property type="term" value="F:magnesium ion binding"/>
    <property type="evidence" value="ECO:0007669"/>
    <property type="project" value="UniProtKB-UniRule"/>
</dbReference>
<dbReference type="GO" id="GO:0019877">
    <property type="term" value="P:diaminopimelate biosynthetic process"/>
    <property type="evidence" value="ECO:0007669"/>
    <property type="project" value="UniProtKB-UniRule"/>
</dbReference>
<dbReference type="GO" id="GO:0009089">
    <property type="term" value="P:lysine biosynthetic process via diaminopimelate"/>
    <property type="evidence" value="ECO:0007669"/>
    <property type="project" value="UniProtKB-UniRule"/>
</dbReference>
<dbReference type="CDD" id="cd04649">
    <property type="entry name" value="LbH_THP_succinylT_putative"/>
    <property type="match status" value="1"/>
</dbReference>
<dbReference type="FunFam" id="2.160.10.10:FF:000009">
    <property type="entry name" value="2,3,4,5-tetrahydropyridine-2,6-dicarboxylate N-succinyltransferase"/>
    <property type="match status" value="1"/>
</dbReference>
<dbReference type="Gene3D" id="3.30.70.2010">
    <property type="match status" value="1"/>
</dbReference>
<dbReference type="Gene3D" id="2.160.10.10">
    <property type="entry name" value="Hexapeptide repeat proteins"/>
    <property type="match status" value="1"/>
</dbReference>
<dbReference type="Gene3D" id="3.30.60.70">
    <property type="entry name" value="Trimeric LpxA-like enzymes"/>
    <property type="match status" value="1"/>
</dbReference>
<dbReference type="HAMAP" id="MF_02122">
    <property type="entry name" value="DapD_type2"/>
    <property type="match status" value="1"/>
</dbReference>
<dbReference type="InterPro" id="IPR019875">
    <property type="entry name" value="DapD_actinobacteria"/>
</dbReference>
<dbReference type="InterPro" id="IPR001451">
    <property type="entry name" value="Hexapep"/>
</dbReference>
<dbReference type="InterPro" id="IPR032784">
    <property type="entry name" value="THDPS_M"/>
</dbReference>
<dbReference type="InterPro" id="IPR038361">
    <property type="entry name" value="THDPS_M_sf"/>
</dbReference>
<dbReference type="InterPro" id="IPR011004">
    <property type="entry name" value="Trimer_LpxA-like_sf"/>
</dbReference>
<dbReference type="InterPro" id="IPR026586">
    <property type="entry name" value="Type2_DapD"/>
</dbReference>
<dbReference type="NCBIfam" id="TIGR03535">
    <property type="entry name" value="DapD_actino"/>
    <property type="match status" value="1"/>
</dbReference>
<dbReference type="Pfam" id="PF14602">
    <property type="entry name" value="Hexapep_2"/>
    <property type="match status" value="1"/>
</dbReference>
<dbReference type="Pfam" id="PF14789">
    <property type="entry name" value="THDPS_M"/>
    <property type="match status" value="1"/>
</dbReference>
<dbReference type="SUPFAM" id="SSF51161">
    <property type="entry name" value="Trimeric LpxA-like enzymes"/>
    <property type="match status" value="1"/>
</dbReference>
<sequence length="314" mass="32451">MTAASGIGLATITADGTVLDTWFPAPELSASGPAGTARLTGDDVPADLAALTGKDEDRDVEVVAVRTTIADLNDKPADTHDVWLRLHLLSHRLTKPHEANLDGIFGLLSNVVWTNFGPCAVEGFETTRARLRKRGAVAVYGIDKFPRMVDYVTPSGVRIADADRVRLGAHLASGTTVMHEGFVNFNAGTLGTSMVEGRISAGVVVDDGSDIGGGASIMGTLSGGGKEVIKVGKRCLLGANSGLGISLGDDCVVEAGLYVTGGTKVTTADGQVTKAIELSGASNLLFRRNSLSGAVEVVKRDGTGITLNEALHAN</sequence>
<comment type="function">
    <text evidence="1">Catalyzes the conversion of the cyclic tetrahydrodipicolinate (THDP) into the acyclic N-succinyl-L-2-amino-6-oxopimelate using succinyl-CoA.</text>
</comment>
<comment type="catalytic activity">
    <reaction evidence="1">
        <text>(S)-2,3,4,5-tetrahydrodipicolinate + succinyl-CoA + H2O = (S)-2-succinylamino-6-oxoheptanedioate + CoA</text>
        <dbReference type="Rhea" id="RHEA:17325"/>
        <dbReference type="ChEBI" id="CHEBI:15377"/>
        <dbReference type="ChEBI" id="CHEBI:15685"/>
        <dbReference type="ChEBI" id="CHEBI:16845"/>
        <dbReference type="ChEBI" id="CHEBI:57287"/>
        <dbReference type="ChEBI" id="CHEBI:57292"/>
        <dbReference type="EC" id="2.3.1.117"/>
    </reaction>
</comment>
<comment type="pathway">
    <text evidence="1">Amino-acid biosynthesis; L-lysine biosynthesis via DAP pathway; LL-2,6-diaminopimelate from (S)-tetrahydrodipicolinate (succinylase route): step 1/3.</text>
</comment>
<comment type="subunit">
    <text evidence="1">Homotrimer.</text>
</comment>
<comment type="subcellular location">
    <subcellularLocation>
        <location evidence="1">Cytoplasm</location>
    </subcellularLocation>
</comment>
<comment type="similarity">
    <text evidence="1">Belongs to the type 2 tetrahydrodipicolinate N-succinyltransferase family.</text>
</comment>